<comment type="function">
    <text evidence="1">IF-3 binds to the 30S ribosomal subunit and shifts the equilibrium between 70S ribosomes and their 50S and 30S subunits in favor of the free subunits, thus enhancing the availability of 30S subunits on which protein synthesis initiation begins.</text>
</comment>
<comment type="subunit">
    <text evidence="1">Monomer.</text>
</comment>
<comment type="subcellular location">
    <subcellularLocation>
        <location evidence="1">Cytoplasm</location>
    </subcellularLocation>
</comment>
<comment type="similarity">
    <text evidence="1">Belongs to the IF-3 family.</text>
</comment>
<keyword id="KW-0963">Cytoplasm</keyword>
<keyword id="KW-0396">Initiation factor</keyword>
<keyword id="KW-0648">Protein biosynthesis</keyword>
<keyword id="KW-1185">Reference proteome</keyword>
<evidence type="ECO:0000255" key="1">
    <source>
        <dbReference type="HAMAP-Rule" id="MF_00080"/>
    </source>
</evidence>
<feature type="chain" id="PRO_1000071211" description="Translation initiation factor IF-3">
    <location>
        <begin position="1"/>
        <end position="173"/>
    </location>
</feature>
<reference key="1">
    <citation type="journal article" date="2011" name="Stand. Genomic Sci.">
        <title>Complete genome sequence of Parvibaculum lavamentivorans type strain (DS-1(T)).</title>
        <authorList>
            <person name="Schleheck D."/>
            <person name="Weiss M."/>
            <person name="Pitluck S."/>
            <person name="Bruce D."/>
            <person name="Land M.L."/>
            <person name="Han S."/>
            <person name="Saunders E."/>
            <person name="Tapia R."/>
            <person name="Detter C."/>
            <person name="Brettin T."/>
            <person name="Han J."/>
            <person name="Woyke T."/>
            <person name="Goodwin L."/>
            <person name="Pennacchio L."/>
            <person name="Nolan M."/>
            <person name="Cook A.M."/>
            <person name="Kjelleberg S."/>
            <person name="Thomas T."/>
        </authorList>
    </citation>
    <scope>NUCLEOTIDE SEQUENCE [LARGE SCALE GENOMIC DNA]</scope>
    <source>
        <strain>DS-1 / DSM 13023 / NCIMB 13966</strain>
    </source>
</reference>
<dbReference type="EMBL" id="CP000774">
    <property type="protein sequence ID" value="ABS61830.1"/>
    <property type="molecule type" value="Genomic_DNA"/>
</dbReference>
<dbReference type="RefSeq" id="WP_011995121.1">
    <property type="nucleotide sequence ID" value="NC_009719.1"/>
</dbReference>
<dbReference type="SMR" id="A7HPJ7"/>
<dbReference type="STRING" id="402881.Plav_0207"/>
<dbReference type="KEGG" id="pla:Plav_0207"/>
<dbReference type="eggNOG" id="COG0290">
    <property type="taxonomic scope" value="Bacteria"/>
</dbReference>
<dbReference type="HOGENOM" id="CLU_054919_3_2_5"/>
<dbReference type="OrthoDB" id="9806014at2"/>
<dbReference type="Proteomes" id="UP000006377">
    <property type="component" value="Chromosome"/>
</dbReference>
<dbReference type="GO" id="GO:0005829">
    <property type="term" value="C:cytosol"/>
    <property type="evidence" value="ECO:0007669"/>
    <property type="project" value="TreeGrafter"/>
</dbReference>
<dbReference type="GO" id="GO:0016020">
    <property type="term" value="C:membrane"/>
    <property type="evidence" value="ECO:0007669"/>
    <property type="project" value="TreeGrafter"/>
</dbReference>
<dbReference type="GO" id="GO:0043022">
    <property type="term" value="F:ribosome binding"/>
    <property type="evidence" value="ECO:0007669"/>
    <property type="project" value="TreeGrafter"/>
</dbReference>
<dbReference type="GO" id="GO:0003743">
    <property type="term" value="F:translation initiation factor activity"/>
    <property type="evidence" value="ECO:0007669"/>
    <property type="project" value="UniProtKB-UniRule"/>
</dbReference>
<dbReference type="GO" id="GO:0032790">
    <property type="term" value="P:ribosome disassembly"/>
    <property type="evidence" value="ECO:0007669"/>
    <property type="project" value="TreeGrafter"/>
</dbReference>
<dbReference type="FunFam" id="3.10.20.80:FF:000001">
    <property type="entry name" value="Translation initiation factor IF-3"/>
    <property type="match status" value="1"/>
</dbReference>
<dbReference type="FunFam" id="3.30.110.10:FF:000001">
    <property type="entry name" value="Translation initiation factor IF-3"/>
    <property type="match status" value="1"/>
</dbReference>
<dbReference type="Gene3D" id="3.30.110.10">
    <property type="entry name" value="Translation initiation factor 3 (IF-3), C-terminal domain"/>
    <property type="match status" value="1"/>
</dbReference>
<dbReference type="Gene3D" id="3.10.20.80">
    <property type="entry name" value="Translation initiation factor 3 (IF-3), N-terminal domain"/>
    <property type="match status" value="1"/>
</dbReference>
<dbReference type="HAMAP" id="MF_00080">
    <property type="entry name" value="IF_3"/>
    <property type="match status" value="1"/>
</dbReference>
<dbReference type="InterPro" id="IPR036788">
    <property type="entry name" value="T_IF-3_C_sf"/>
</dbReference>
<dbReference type="InterPro" id="IPR036787">
    <property type="entry name" value="T_IF-3_N_sf"/>
</dbReference>
<dbReference type="InterPro" id="IPR019813">
    <property type="entry name" value="Translation_initiation_fac3_CS"/>
</dbReference>
<dbReference type="InterPro" id="IPR001288">
    <property type="entry name" value="Translation_initiation_fac_3"/>
</dbReference>
<dbReference type="InterPro" id="IPR019815">
    <property type="entry name" value="Translation_initiation_fac_3_C"/>
</dbReference>
<dbReference type="InterPro" id="IPR019814">
    <property type="entry name" value="Translation_initiation_fac_3_N"/>
</dbReference>
<dbReference type="NCBIfam" id="TIGR00168">
    <property type="entry name" value="infC"/>
    <property type="match status" value="1"/>
</dbReference>
<dbReference type="PANTHER" id="PTHR10938">
    <property type="entry name" value="TRANSLATION INITIATION FACTOR IF-3"/>
    <property type="match status" value="1"/>
</dbReference>
<dbReference type="PANTHER" id="PTHR10938:SF0">
    <property type="entry name" value="TRANSLATION INITIATION FACTOR IF-3, MITOCHONDRIAL"/>
    <property type="match status" value="1"/>
</dbReference>
<dbReference type="Pfam" id="PF00707">
    <property type="entry name" value="IF3_C"/>
    <property type="match status" value="1"/>
</dbReference>
<dbReference type="Pfam" id="PF05198">
    <property type="entry name" value="IF3_N"/>
    <property type="match status" value="1"/>
</dbReference>
<dbReference type="SUPFAM" id="SSF55200">
    <property type="entry name" value="Translation initiation factor IF3, C-terminal domain"/>
    <property type="match status" value="1"/>
</dbReference>
<dbReference type="SUPFAM" id="SSF54364">
    <property type="entry name" value="Translation initiation factor IF3, N-terminal domain"/>
    <property type="match status" value="1"/>
</dbReference>
<dbReference type="PROSITE" id="PS00938">
    <property type="entry name" value="IF3"/>
    <property type="match status" value="1"/>
</dbReference>
<gene>
    <name evidence="1" type="primary">infC</name>
    <name type="ordered locus">Plav_0207</name>
</gene>
<sequence length="173" mass="19887">MQAPPTREGPRINDMIDEPTVLLIDAEGEKRGVIPTDEAIRMAEEAGLDLVEVSPNAKPPVCKLLDYGKFKYQAQKKANEARKKQKTVEVKEIKMRPNIDTHDYEVKMRAMLRFFEEGDKVKVTLRFRGREMAHQELGMVLLNKVKEEVEPIAKVELYPRLEGRQMIMVLAPK</sequence>
<protein>
    <recommendedName>
        <fullName evidence="1">Translation initiation factor IF-3</fullName>
    </recommendedName>
</protein>
<organism>
    <name type="scientific">Parvibaculum lavamentivorans (strain DS-1 / DSM 13023 / NCIMB 13966)</name>
    <dbReference type="NCBI Taxonomy" id="402881"/>
    <lineage>
        <taxon>Bacteria</taxon>
        <taxon>Pseudomonadati</taxon>
        <taxon>Pseudomonadota</taxon>
        <taxon>Alphaproteobacteria</taxon>
        <taxon>Hyphomicrobiales</taxon>
        <taxon>Parvibaculaceae</taxon>
        <taxon>Parvibaculum</taxon>
    </lineage>
</organism>
<accession>A7HPJ7</accession>
<name>IF3_PARL1</name>
<proteinExistence type="inferred from homology"/>